<reference key="1">
    <citation type="journal article" date="2011" name="PLoS Genet.">
        <title>Genome sequencing and comparative transcriptomics of the model entomopathogenic fungi Metarhizium anisopliae and M. acridum.</title>
        <authorList>
            <person name="Gao Q."/>
            <person name="Jin K."/>
            <person name="Ying S.-H."/>
            <person name="Zhang Y."/>
            <person name="Xiao G."/>
            <person name="Shang Y."/>
            <person name="Duan Z."/>
            <person name="Hu X."/>
            <person name="Xie X.-Q."/>
            <person name="Zhou G."/>
            <person name="Peng G."/>
            <person name="Luo Z."/>
            <person name="Huang W."/>
            <person name="Wang B."/>
            <person name="Fang W."/>
            <person name="Wang S."/>
            <person name="Zhong Y."/>
            <person name="Ma L.-J."/>
            <person name="St Leger R.J."/>
            <person name="Zhao G.-P."/>
            <person name="Pei Y."/>
            <person name="Feng M.-G."/>
            <person name="Xia Y."/>
            <person name="Wang C."/>
        </authorList>
    </citation>
    <scope>NUCLEOTIDE SEQUENCE [LARGE SCALE GENOMIC DNA]</scope>
    <source>
        <strain>ARSEF 23 / ATCC MYA-3075</strain>
    </source>
</reference>
<reference key="2">
    <citation type="journal article" date="2014" name="Proc. Natl. Acad. Sci. U.S.A.">
        <title>Trajectory and genomic determinants of fungal-pathogen speciation and host adaptation.</title>
        <authorList>
            <person name="Hu X."/>
            <person name="Xiao G."/>
            <person name="Zheng P."/>
            <person name="Shang Y."/>
            <person name="Su Y."/>
            <person name="Zhang X."/>
            <person name="Liu X."/>
            <person name="Zhan S."/>
            <person name="St Leger R.J."/>
            <person name="Wang C."/>
        </authorList>
    </citation>
    <scope>GENOME REANNOTATION</scope>
    <source>
        <strain>ARSEF 23 / ATCC MYA-3075</strain>
    </source>
</reference>
<reference key="3">
    <citation type="journal article" date="2017" name="G3 (Bethesda)">
        <title>Swainsonine biosynthesis genes in diverse symbiotic and pathogenic fungi.</title>
        <authorList>
            <person name="Cook D."/>
            <person name="Donzelli B.G."/>
            <person name="Creamer R."/>
            <person name="Baucom D.L."/>
            <person name="Gardner D.R."/>
            <person name="Pan J."/>
            <person name="Moore N."/>
            <person name="Jaromczyk J.W."/>
            <person name="Schardl C.L."/>
        </authorList>
    </citation>
    <scope>FUNCTION</scope>
    <scope>PATHWAY</scope>
</reference>
<reference key="4">
    <citation type="journal article" date="2020" name="ACS Chem. Biol.">
        <title>Unveiling of Swainsonine Biosynthesis via a Multibranched Pathway in Fungi.</title>
        <authorList>
            <person name="Luo F."/>
            <person name="Hong S."/>
            <person name="Chen B."/>
            <person name="Yin Y."/>
            <person name="Tang G."/>
            <person name="Hu F."/>
            <person name="Zhang H."/>
            <person name="Wang C."/>
        </authorList>
    </citation>
    <scope>FUNCTION</scope>
    <scope>DISRUPTION PHENOTYPE</scope>
    <scope>CATALYTIC ACTIVITY</scope>
    <scope>PATHWAY</scope>
</reference>
<keyword id="KW-0032">Aminotransferase</keyword>
<keyword id="KW-0663">Pyridoxal phosphate</keyword>
<keyword id="KW-0808">Transferase</keyword>
<name>SWNA_METRA</name>
<proteinExistence type="evidence at protein level"/>
<accession>E9F8L8</accession>
<comment type="function">
    <text evidence="3 4 7">Aminotransferase; part of the gene cluster that mediates the biosynthesis of swainsonine (SW), a cytotoxic fungal alkaloid and a potential cancer therapy drug (PubMed:28381497, PubMed:32786262). Swainsonine production occurs via a multibranched pathway and is dispensable for fungal colonization of plants and infection of insect hosts (PubMed:32786262). The first step of swainsonine biosynthesis is the production of the precursor pipecolic acid (PA) via conversion of L-lysine (Lys) to 1-piperideine-6-carboxylate (P6C) by the aminotransferase swnA, the latter being further reduced to PA by the reductase swnR (PubMed:32786262). PA can be converted from lysine by both the SW biosynthetic cluster and the unclustered genes such as lysine cyclodeaminase (PubMed:32786262). The PKS-NRPS hybrid synthetase swnK uptakes and condensates PA and malonyl-CoA with and without skipping of the ketoreductase (KR) domain in order to produce 3 intermediates, 1-oxoindolizidine, (1S)-1-hydroxyindolizin, and (1R)-1-hydroxyindolizine; with the transisomer (1S)-1-hydroxyindolizin being predominant (PubMed:32786262). The terminal thioester reductase (TE) domain of swnK is involved in reduction of the thioester bond to release the intermediate aldehydes (PubMed:32786262). The oxidoreductase swnN could contribute to the reduction of 1-oxoindolizidine to (1S)-1-hydroxyindolizin and (1R)-1-hydroxyindolizine, contributing to the major route of SW production (Probable). The dioxygenase swnH2 would be responsible for the oxidization of (1R)-1-hydroxyindolizine into (1R,2S)-1,2-dihydroxyindolizine and of (1S)-1-hydroxyindolizin to yield both (1R,2S)-1,2-dihydroxyindolizine and (1S,2S)-1,2-dihydroxyindolizine (PubMed:32786262). The dioxygenase swnH1 then performs the conversion of the 1,2-dihydroxyindolizine epimers to SW (PubMed:32786262).</text>
</comment>
<comment type="cofactor">
    <cofactor evidence="1">
        <name>pyridoxal 5'-phosphate</name>
        <dbReference type="ChEBI" id="CHEBI:597326"/>
    </cofactor>
</comment>
<comment type="pathway">
    <text evidence="4">Mycotoxin biosynthesis.</text>
</comment>
<comment type="disruption phenotype">
    <text evidence="4">Impairs the production of 1-oxoindolizidine, (1S)-1-hydroxyindolizin, and (1R)-1-hydroxyindolizine and completely abolishes the production of swainsonine.</text>
</comment>
<comment type="similarity">
    <text evidence="2">Belongs to the class-I pyridoxal-phosphate-dependent aminotransferase family.</text>
</comment>
<sequence>MHLERDKVYDAPEGEVWSTVKPASTHNSAAPKRLAQRWNHRWSDESLTQGVSPLKDSSKTVKASTTIPLGTGRPTALYYPWQSVSMAGTEASRQPRGLKPTLAGNMTCSKGEAAFDLSSALNYGEPSGWSQLVAFFRETTGRVHRPPYADWDTTLTCGSTSAVDLVLRMFCNRGDCVLAERFTYPGTLMASRAQGLRTVGIAMDADGLVPEALDAALRGWDAASRGRKPFVLYTIPSGHNPTGVTQSAARKRAVYQVAERHDLLIVEDDPYFFLRLGRGGGGESLPTSYLSLDTAGRVVRVESTSKILAPGLRCGWLTASRQVVDMFGNFAEVGPSSPAGPSQAMLYKLLVESWGPEGFAGWLDYLSGEYGRRRDVMVAACERHLPREVCAWTAPTHGMFLWVGAALERHPRYQESGARDQDRDADADAELCRAVEDGICARAEANGVLVARGSWCRVGGGADRAFFRMTFVATAEAADLERGVAQFGRAVRDEFGLG</sequence>
<organism>
    <name type="scientific">Metarhizium robertsii (strain ARSEF 23 / ATCC MYA-3075)</name>
    <name type="common">Metarhizium anisopliae (strain ARSEF 23)</name>
    <dbReference type="NCBI Taxonomy" id="655844"/>
    <lineage>
        <taxon>Eukaryota</taxon>
        <taxon>Fungi</taxon>
        <taxon>Dikarya</taxon>
        <taxon>Ascomycota</taxon>
        <taxon>Pezizomycotina</taxon>
        <taxon>Sordariomycetes</taxon>
        <taxon>Hypocreomycetidae</taxon>
        <taxon>Hypocreales</taxon>
        <taxon>Clavicipitaceae</taxon>
        <taxon>Metarhizium</taxon>
    </lineage>
</organism>
<evidence type="ECO:0000250" key="1">
    <source>
        <dbReference type="UniProtKB" id="P00509"/>
    </source>
</evidence>
<evidence type="ECO:0000255" key="2"/>
<evidence type="ECO:0000269" key="3">
    <source>
    </source>
</evidence>
<evidence type="ECO:0000269" key="4">
    <source>
    </source>
</evidence>
<evidence type="ECO:0000303" key="5">
    <source>
    </source>
</evidence>
<evidence type="ECO:0000305" key="6">
    <source>
    </source>
</evidence>
<evidence type="ECO:0000305" key="7">
    <source>
    </source>
</evidence>
<gene>
    <name evidence="5" type="primary">swnA</name>
    <name type="ORF">MAA_08617</name>
</gene>
<protein>
    <recommendedName>
        <fullName evidence="5">Aminotransferase swnA</fullName>
        <ecNumber evidence="6">2.6.1.-</ecNumber>
    </recommendedName>
    <alternativeName>
        <fullName evidence="5">Swainsonine biosynthesis gene cluster protein A</fullName>
    </alternativeName>
</protein>
<dbReference type="EC" id="2.6.1.-" evidence="6"/>
<dbReference type="EMBL" id="ADNJ02000001">
    <property type="protein sequence ID" value="EFY95964.2"/>
    <property type="molecule type" value="Genomic_DNA"/>
</dbReference>
<dbReference type="RefSeq" id="XP_007824806.2">
    <property type="nucleotide sequence ID" value="XM_007826615.2"/>
</dbReference>
<dbReference type="SMR" id="E9F8L8"/>
<dbReference type="GeneID" id="19262903"/>
<dbReference type="KEGG" id="maj:MAA_08617"/>
<dbReference type="HOGENOM" id="CLU_017584_0_5_1"/>
<dbReference type="OrthoDB" id="691673at2759"/>
<dbReference type="Proteomes" id="UP000002498">
    <property type="component" value="Unassembled WGS sequence"/>
</dbReference>
<dbReference type="GO" id="GO:0047536">
    <property type="term" value="F:2-aminoadipate transaminase activity"/>
    <property type="evidence" value="ECO:0007669"/>
    <property type="project" value="TreeGrafter"/>
</dbReference>
<dbReference type="GO" id="GO:0008793">
    <property type="term" value="F:aromatic-amino-acid transaminase activity"/>
    <property type="evidence" value="ECO:0007669"/>
    <property type="project" value="TreeGrafter"/>
</dbReference>
<dbReference type="GO" id="GO:0030170">
    <property type="term" value="F:pyridoxal phosphate binding"/>
    <property type="evidence" value="ECO:0007669"/>
    <property type="project" value="InterPro"/>
</dbReference>
<dbReference type="GO" id="GO:0009074">
    <property type="term" value="P:aromatic amino acid family catabolic process"/>
    <property type="evidence" value="ECO:0007669"/>
    <property type="project" value="TreeGrafter"/>
</dbReference>
<dbReference type="GO" id="GO:0019878">
    <property type="term" value="P:lysine biosynthetic process via aminoadipic acid"/>
    <property type="evidence" value="ECO:0007669"/>
    <property type="project" value="TreeGrafter"/>
</dbReference>
<dbReference type="GO" id="GO:0006571">
    <property type="term" value="P:tyrosine biosynthetic process"/>
    <property type="evidence" value="ECO:0007669"/>
    <property type="project" value="TreeGrafter"/>
</dbReference>
<dbReference type="CDD" id="cd00609">
    <property type="entry name" value="AAT_like"/>
    <property type="match status" value="1"/>
</dbReference>
<dbReference type="Gene3D" id="3.40.640.10">
    <property type="entry name" value="Type I PLP-dependent aspartate aminotransferase-like (Major domain)"/>
    <property type="match status" value="1"/>
</dbReference>
<dbReference type="InterPro" id="IPR004839">
    <property type="entry name" value="Aminotransferase_I/II_large"/>
</dbReference>
<dbReference type="InterPro" id="IPR050859">
    <property type="entry name" value="Class-I_PLP-dep_aminotransf"/>
</dbReference>
<dbReference type="InterPro" id="IPR015424">
    <property type="entry name" value="PyrdxlP-dep_Trfase"/>
</dbReference>
<dbReference type="InterPro" id="IPR015421">
    <property type="entry name" value="PyrdxlP-dep_Trfase_major"/>
</dbReference>
<dbReference type="PANTHER" id="PTHR42790">
    <property type="entry name" value="AMINOTRANSFERASE"/>
    <property type="match status" value="1"/>
</dbReference>
<dbReference type="PANTHER" id="PTHR42790:SF21">
    <property type="entry name" value="AROMATIC_AMINOADIPATE AMINOTRANSFERASE 1"/>
    <property type="match status" value="1"/>
</dbReference>
<dbReference type="Pfam" id="PF00155">
    <property type="entry name" value="Aminotran_1_2"/>
    <property type="match status" value="1"/>
</dbReference>
<dbReference type="SUPFAM" id="SSF53383">
    <property type="entry name" value="PLP-dependent transferases"/>
    <property type="match status" value="1"/>
</dbReference>
<feature type="chain" id="PRO_0000441180" description="Aminotransferase swnA">
    <location>
        <begin position="1"/>
        <end position="498"/>
    </location>
</feature>